<gene>
    <name type="primary">SO4</name>
</gene>
<comment type="function">
    <text evidence="1">Omega-conotoxins act at presynaptic membranes, they bind and block voltage-gated calcium channels (Cav).</text>
</comment>
<comment type="subcellular location">
    <subcellularLocation>
        <location evidence="1">Secreted</location>
    </subcellularLocation>
</comment>
<comment type="tissue specificity">
    <text>Expressed by the venom duct.</text>
</comment>
<comment type="domain">
    <text evidence="1">The presence of a 'disulfide through disulfide knot' structurally defines this protein as a knottin.</text>
</comment>
<comment type="domain">
    <text>The cysteine framework is VI/VII (C-C-CC-C-C).</text>
</comment>
<comment type="similarity">
    <text evidence="3">Belongs to the conotoxin O1 superfamily.</text>
</comment>
<evidence type="ECO:0000250" key="1"/>
<evidence type="ECO:0000255" key="2"/>
<evidence type="ECO:0000305" key="3"/>
<keyword id="KW-0108">Calcium channel impairing toxin</keyword>
<keyword id="KW-1015">Disulfide bond</keyword>
<keyword id="KW-0872">Ion channel impairing toxin</keyword>
<keyword id="KW-0960">Knottin</keyword>
<keyword id="KW-0528">Neurotoxin</keyword>
<keyword id="KW-0638">Presynaptic neurotoxin</keyword>
<keyword id="KW-0964">Secreted</keyword>
<keyword id="KW-0732">Signal</keyword>
<keyword id="KW-0800">Toxin</keyword>
<keyword id="KW-1218">Voltage-gated calcium channel impairing toxin</keyword>
<organism>
    <name type="scientific">Conus striatus</name>
    <name type="common">Striated cone</name>
    <dbReference type="NCBI Taxonomy" id="6493"/>
    <lineage>
        <taxon>Eukaryota</taxon>
        <taxon>Metazoa</taxon>
        <taxon>Spiralia</taxon>
        <taxon>Lophotrochozoa</taxon>
        <taxon>Mollusca</taxon>
        <taxon>Gastropoda</taxon>
        <taxon>Caenogastropoda</taxon>
        <taxon>Neogastropoda</taxon>
        <taxon>Conoidea</taxon>
        <taxon>Conidae</taxon>
        <taxon>Conus</taxon>
        <taxon>Pionoconus</taxon>
    </lineage>
</organism>
<accession>Q9XZK3</accession>
<name>O164_CONST</name>
<proteinExistence type="evidence at transcript level"/>
<protein>
    <recommendedName>
        <fullName>Omega-conotoxin-like SO-4</fullName>
        <shortName>Omega-conotoxin SO4</shortName>
    </recommendedName>
</protein>
<feature type="signal peptide" evidence="2">
    <location>
        <begin position="1"/>
        <end position="22"/>
    </location>
</feature>
<feature type="propeptide" id="PRO_0000034934" evidence="1">
    <location>
        <begin position="23"/>
        <end position="42"/>
    </location>
</feature>
<feature type="peptide" id="PRO_0000034935" description="Omega-conotoxin-like SO-4">
    <location>
        <begin position="43"/>
        <end position="78"/>
    </location>
</feature>
<feature type="disulfide bond" evidence="1">
    <location>
        <begin position="46"/>
        <end position="62"/>
    </location>
</feature>
<feature type="disulfide bond" evidence="1">
    <location>
        <begin position="53"/>
        <end position="65"/>
    </location>
</feature>
<feature type="disulfide bond" evidence="1">
    <location>
        <begin position="61"/>
        <end position="72"/>
    </location>
</feature>
<dbReference type="EMBL" id="AF146349">
    <property type="protein sequence ID" value="AAD31909.1"/>
    <property type="molecule type" value="mRNA"/>
</dbReference>
<dbReference type="SMR" id="Q9XZK3"/>
<dbReference type="ConoServer" id="865">
    <property type="toxin name" value="SO4 precursor"/>
</dbReference>
<dbReference type="GO" id="GO:0005576">
    <property type="term" value="C:extracellular region"/>
    <property type="evidence" value="ECO:0007669"/>
    <property type="project" value="UniProtKB-SubCell"/>
</dbReference>
<dbReference type="GO" id="GO:0044231">
    <property type="term" value="C:host cell presynaptic membrane"/>
    <property type="evidence" value="ECO:0007669"/>
    <property type="project" value="UniProtKB-KW"/>
</dbReference>
<dbReference type="GO" id="GO:0005246">
    <property type="term" value="F:calcium channel regulator activity"/>
    <property type="evidence" value="ECO:0007669"/>
    <property type="project" value="UniProtKB-KW"/>
</dbReference>
<dbReference type="GO" id="GO:0008200">
    <property type="term" value="F:ion channel inhibitor activity"/>
    <property type="evidence" value="ECO:0007669"/>
    <property type="project" value="InterPro"/>
</dbReference>
<dbReference type="GO" id="GO:0090729">
    <property type="term" value="F:toxin activity"/>
    <property type="evidence" value="ECO:0007669"/>
    <property type="project" value="UniProtKB-KW"/>
</dbReference>
<dbReference type="InterPro" id="IPR004214">
    <property type="entry name" value="Conotoxin"/>
</dbReference>
<dbReference type="InterPro" id="IPR012321">
    <property type="entry name" value="Conotoxin_omega-typ_CS"/>
</dbReference>
<dbReference type="Pfam" id="PF02950">
    <property type="entry name" value="Conotoxin"/>
    <property type="match status" value="1"/>
</dbReference>
<dbReference type="PROSITE" id="PS60004">
    <property type="entry name" value="OMEGA_CONOTOXIN"/>
    <property type="match status" value="1"/>
</dbReference>
<sequence>MKLTCMVIVAVLLLTACQLITADDSRGTQKHRSLRSTTKVSKATDCIEAGNYCGPTVMKICCGFCSPYSKICMNYPKN</sequence>
<reference key="1">
    <citation type="journal article" date="1999" name="Peptides">
        <title>Conopeptides from Conus striatus and Conus textile by cDNA cloning.</title>
        <authorList>
            <person name="Lu B.-S."/>
            <person name="Yu F."/>
            <person name="Zhao D."/>
            <person name="Huang P.-T."/>
            <person name="Huang C.-F."/>
        </authorList>
    </citation>
    <scope>NUCLEOTIDE SEQUENCE [MRNA]</scope>
    <source>
        <tissue>Venom duct</tissue>
    </source>
</reference>